<feature type="chain" id="PRO_0000416738" description="Inositol phosphorylceramide glucuronosyltransferase 1">
    <location>
        <begin position="1"/>
        <end position="537"/>
    </location>
</feature>
<feature type="transmembrane region" description="Helical" evidence="3">
    <location>
        <begin position="6"/>
        <end position="26"/>
    </location>
</feature>
<feature type="transmembrane region" description="Helical" evidence="3">
    <location>
        <begin position="293"/>
        <end position="313"/>
    </location>
</feature>
<feature type="transmembrane region" description="Helical" evidence="3">
    <location>
        <begin position="375"/>
        <end position="395"/>
    </location>
</feature>
<feature type="transmembrane region" description="Helical" evidence="3">
    <location>
        <begin position="406"/>
        <end position="426"/>
    </location>
</feature>
<feature type="transmembrane region" description="Helical" evidence="3">
    <location>
        <begin position="468"/>
        <end position="488"/>
    </location>
</feature>
<feature type="transmembrane region" description="Helical" evidence="3">
    <location>
        <begin position="494"/>
        <end position="514"/>
    </location>
</feature>
<feature type="binding site" evidence="2">
    <location>
        <begin position="124"/>
        <end position="126"/>
    </location>
    <ligand>
        <name>substrate</name>
    </ligand>
</feature>
<feature type="binding site" evidence="1">
    <location>
        <position position="124"/>
    </location>
    <ligand>
        <name>Mn(2+)</name>
        <dbReference type="ChEBI" id="CHEBI:29035"/>
    </ligand>
</feature>
<feature type="binding site" evidence="1">
    <location>
        <position position="126"/>
    </location>
    <ligand>
        <name>Mn(2+)</name>
        <dbReference type="ChEBI" id="CHEBI:29035"/>
    </ligand>
</feature>
<feature type="binding site" evidence="2">
    <location>
        <begin position="153"/>
        <end position="155"/>
    </location>
    <ligand>
        <name>substrate</name>
    </ligand>
</feature>
<feature type="binding site" evidence="2">
    <location>
        <begin position="180"/>
        <end position="184"/>
    </location>
    <ligand>
        <name>substrate</name>
    </ligand>
</feature>
<feature type="binding site" evidence="2">
    <location>
        <begin position="248"/>
        <end position="255"/>
    </location>
    <ligand>
        <name>substrate</name>
    </ligand>
</feature>
<feature type="binding site" evidence="1">
    <location>
        <position position="248"/>
    </location>
    <ligand>
        <name>Mn(2+)</name>
        <dbReference type="ChEBI" id="CHEBI:29035"/>
    </ligand>
</feature>
<feature type="site" description="Important for catalytic activity" evidence="1">
    <location>
        <position position="108"/>
    </location>
</feature>
<feature type="sequence conflict" description="In Ref. 5; AAL58891/AAN28860." evidence="9" ref="5">
    <original>G</original>
    <variation>R</variation>
    <location>
        <position position="182"/>
    </location>
</feature>
<feature type="sequence conflict" description="In Ref. 5; AAL58891/AAN28860." evidence="9" ref="5">
    <original>G</original>
    <variation>E</variation>
    <location>
        <position position="389"/>
    </location>
</feature>
<sequence length="537" mass="60011">MVRLKTSLWVLLLALVSIQLNGSFGSESSKVAYVTLLYGDEFLLGVRVLGKSIRDTGSTKDMVALVSDGVSDYSKKLLKADGWKVEKISLLANPNQVHPTRFWGVYTKLKIFNMTDYKKVVYLDADTIVVKNIEDLFKCSKFCANLKHSERLNSGVMVVEPSEALFNDMMRKVKTLSSYTGGDQGFLNSYYPDFPNARVFDPSVTPEVLKTRPVPAMERLSTLYNADVGLYMLANKWMVDDSKLHVIHYTLGPLKPWDWWTAWLVKPVDAWHSIRVKLEETLPGTGGGSNQHDELVVKFLFLLPLCALLFCIYRSIQGREGSLCWSSFSNQIRYLYYKVRSNGTLGYGGVSTMSPSYQPHSGNAQSKVPQHLGAVSVVVCFTAVLLSLGISFAIVPRQIMPWTGLVLVYEWTFTIFFLLFGVFLLFVHQHGKRIAIQSESSSLDDSAKVHQRAGGSCDVTTLYYGLGMAFLAIAAVSLPYILGITALFTRLGLMVGLAIILAAFMTYASEHLAVRWFLKGLEDRRDTTRSNSLCFLC</sequence>
<accession>Q8GWB7</accession>
<accession>Q8W118</accession>
<accession>W8Q2T0</accession>
<reference key="1">
    <citation type="journal article" date="2014" name="Plant Cell">
        <title>Identification of a sphingolipid alpha-glucuronosyltransferase that is essential for pollen function in Arabidopsis.</title>
        <authorList>
            <person name="Rennie E.A."/>
            <person name="Ebert B."/>
            <person name="Miles G.P."/>
            <person name="Cahoon R.E."/>
            <person name="Christiansen K.M."/>
            <person name="Stonebloom S."/>
            <person name="Khatab H."/>
            <person name="Twell D."/>
            <person name="Petzold C.J."/>
            <person name="Adams P.D."/>
            <person name="Dupree P."/>
            <person name="Heazlewood J.L."/>
            <person name="Cahoon E.B."/>
            <person name="Scheller H.V."/>
        </authorList>
    </citation>
    <scope>NUCLEOTIDE SEQUENCE [MRNA]</scope>
    <scope>FUNCTION</scope>
    <scope>DEVELOPMENTAL STAGE</scope>
    <scope>DISRUPTION PHENOTYPE</scope>
    <scope>CATALYTIC ACTIVITY</scope>
    <scope>TISSUE SPECIFICITY</scope>
    <source>
        <strain>cv. Columbia</strain>
    </source>
</reference>
<reference key="2">
    <citation type="journal article" date="2000" name="Nature">
        <title>Sequence and analysis of chromosome 5 of the plant Arabidopsis thaliana.</title>
        <authorList>
            <person name="Tabata S."/>
            <person name="Kaneko T."/>
            <person name="Nakamura Y."/>
            <person name="Kotani H."/>
            <person name="Kato T."/>
            <person name="Asamizu E."/>
            <person name="Miyajima N."/>
            <person name="Sasamoto S."/>
            <person name="Kimura T."/>
            <person name="Hosouchi T."/>
            <person name="Kawashima K."/>
            <person name="Kohara M."/>
            <person name="Matsumoto M."/>
            <person name="Matsuno A."/>
            <person name="Muraki A."/>
            <person name="Nakayama S."/>
            <person name="Nakazaki N."/>
            <person name="Naruo K."/>
            <person name="Okumura S."/>
            <person name="Shinpo S."/>
            <person name="Takeuchi C."/>
            <person name="Wada T."/>
            <person name="Watanabe A."/>
            <person name="Yamada M."/>
            <person name="Yasuda M."/>
            <person name="Sato S."/>
            <person name="de la Bastide M."/>
            <person name="Huang E."/>
            <person name="Spiegel L."/>
            <person name="Gnoj L."/>
            <person name="O'Shaughnessy A."/>
            <person name="Preston R."/>
            <person name="Habermann K."/>
            <person name="Murray J."/>
            <person name="Johnson D."/>
            <person name="Rohlfing T."/>
            <person name="Nelson J."/>
            <person name="Stoneking T."/>
            <person name="Pepin K."/>
            <person name="Spieth J."/>
            <person name="Sekhon M."/>
            <person name="Armstrong J."/>
            <person name="Becker M."/>
            <person name="Belter E."/>
            <person name="Cordum H."/>
            <person name="Cordes M."/>
            <person name="Courtney L."/>
            <person name="Courtney W."/>
            <person name="Dante M."/>
            <person name="Du H."/>
            <person name="Edwards J."/>
            <person name="Fryman J."/>
            <person name="Haakensen B."/>
            <person name="Lamar E."/>
            <person name="Latreille P."/>
            <person name="Leonard S."/>
            <person name="Meyer R."/>
            <person name="Mulvaney E."/>
            <person name="Ozersky P."/>
            <person name="Riley A."/>
            <person name="Strowmatt C."/>
            <person name="Wagner-McPherson C."/>
            <person name="Wollam A."/>
            <person name="Yoakum M."/>
            <person name="Bell M."/>
            <person name="Dedhia N."/>
            <person name="Parnell L."/>
            <person name="Shah R."/>
            <person name="Rodriguez M."/>
            <person name="Hoon See L."/>
            <person name="Vil D."/>
            <person name="Baker J."/>
            <person name="Kirchoff K."/>
            <person name="Toth K."/>
            <person name="King L."/>
            <person name="Bahret A."/>
            <person name="Miller B."/>
            <person name="Marra M.A."/>
            <person name="Martienssen R."/>
            <person name="McCombie W.R."/>
            <person name="Wilson R.K."/>
            <person name="Murphy G."/>
            <person name="Bancroft I."/>
            <person name="Volckaert G."/>
            <person name="Wambutt R."/>
            <person name="Duesterhoeft A."/>
            <person name="Stiekema W."/>
            <person name="Pohl T."/>
            <person name="Entian K.-D."/>
            <person name="Terryn N."/>
            <person name="Hartley N."/>
            <person name="Bent E."/>
            <person name="Johnson S."/>
            <person name="Langham S.-A."/>
            <person name="McCullagh B."/>
            <person name="Robben J."/>
            <person name="Grymonprez B."/>
            <person name="Zimmermann W."/>
            <person name="Ramsperger U."/>
            <person name="Wedler H."/>
            <person name="Balke K."/>
            <person name="Wedler E."/>
            <person name="Peters S."/>
            <person name="van Staveren M."/>
            <person name="Dirkse W."/>
            <person name="Mooijman P."/>
            <person name="Klein Lankhorst R."/>
            <person name="Weitzenegger T."/>
            <person name="Bothe G."/>
            <person name="Rose M."/>
            <person name="Hauf J."/>
            <person name="Berneiser S."/>
            <person name="Hempel S."/>
            <person name="Feldpausch M."/>
            <person name="Lamberth S."/>
            <person name="Villarroel R."/>
            <person name="Gielen J."/>
            <person name="Ardiles W."/>
            <person name="Bents O."/>
            <person name="Lemcke K."/>
            <person name="Kolesov G."/>
            <person name="Mayer K.F.X."/>
            <person name="Rudd S."/>
            <person name="Schoof H."/>
            <person name="Schueller C."/>
            <person name="Zaccaria P."/>
            <person name="Mewes H.-W."/>
            <person name="Bevan M."/>
            <person name="Fransz P.F."/>
        </authorList>
    </citation>
    <scope>NUCLEOTIDE SEQUENCE [LARGE SCALE GENOMIC DNA]</scope>
    <source>
        <strain>cv. Columbia</strain>
    </source>
</reference>
<reference key="3">
    <citation type="journal article" date="2017" name="Plant J.">
        <title>Araport11: a complete reannotation of the Arabidopsis thaliana reference genome.</title>
        <authorList>
            <person name="Cheng C.Y."/>
            <person name="Krishnakumar V."/>
            <person name="Chan A.P."/>
            <person name="Thibaud-Nissen F."/>
            <person name="Schobel S."/>
            <person name="Town C.D."/>
        </authorList>
    </citation>
    <scope>GENOME REANNOTATION</scope>
    <source>
        <strain>cv. Columbia</strain>
    </source>
</reference>
<reference key="4">
    <citation type="journal article" date="2002" name="Science">
        <title>Functional annotation of a full-length Arabidopsis cDNA collection.</title>
        <authorList>
            <person name="Seki M."/>
            <person name="Narusaka M."/>
            <person name="Kamiya A."/>
            <person name="Ishida J."/>
            <person name="Satou M."/>
            <person name="Sakurai T."/>
            <person name="Nakajima M."/>
            <person name="Enju A."/>
            <person name="Akiyama K."/>
            <person name="Oono Y."/>
            <person name="Muramatsu M."/>
            <person name="Hayashizaki Y."/>
            <person name="Kawai J."/>
            <person name="Carninci P."/>
            <person name="Itoh M."/>
            <person name="Ishii Y."/>
            <person name="Arakawa T."/>
            <person name="Shibata K."/>
            <person name="Shinagawa A."/>
            <person name="Shinozaki K."/>
        </authorList>
    </citation>
    <scope>NUCLEOTIDE SEQUENCE [LARGE SCALE MRNA]</scope>
    <source>
        <strain>cv. Columbia</strain>
    </source>
</reference>
<reference key="5">
    <citation type="journal article" date="2003" name="Science">
        <title>Empirical analysis of transcriptional activity in the Arabidopsis genome.</title>
        <authorList>
            <person name="Yamada K."/>
            <person name="Lim J."/>
            <person name="Dale J.M."/>
            <person name="Chen H."/>
            <person name="Shinn P."/>
            <person name="Palm C.J."/>
            <person name="Southwick A.M."/>
            <person name="Wu H.C."/>
            <person name="Kim C.J."/>
            <person name="Nguyen M."/>
            <person name="Pham P.K."/>
            <person name="Cheuk R.F."/>
            <person name="Karlin-Newmann G."/>
            <person name="Liu S.X."/>
            <person name="Lam B."/>
            <person name="Sakano H."/>
            <person name="Wu T."/>
            <person name="Yu G."/>
            <person name="Miranda M."/>
            <person name="Quach H.L."/>
            <person name="Tripp M."/>
            <person name="Chang C.H."/>
            <person name="Lee J.M."/>
            <person name="Toriumi M.J."/>
            <person name="Chan M.M."/>
            <person name="Tang C.C."/>
            <person name="Onodera C.S."/>
            <person name="Deng J.M."/>
            <person name="Akiyama K."/>
            <person name="Ansari Y."/>
            <person name="Arakawa T."/>
            <person name="Banh J."/>
            <person name="Banno F."/>
            <person name="Bowser L."/>
            <person name="Brooks S.Y."/>
            <person name="Carninci P."/>
            <person name="Chao Q."/>
            <person name="Choy N."/>
            <person name="Enju A."/>
            <person name="Goldsmith A.D."/>
            <person name="Gurjal M."/>
            <person name="Hansen N.F."/>
            <person name="Hayashizaki Y."/>
            <person name="Johnson-Hopson C."/>
            <person name="Hsuan V.W."/>
            <person name="Iida K."/>
            <person name="Karnes M."/>
            <person name="Khan S."/>
            <person name="Koesema E."/>
            <person name="Ishida J."/>
            <person name="Jiang P.X."/>
            <person name="Jones T."/>
            <person name="Kawai J."/>
            <person name="Kamiya A."/>
            <person name="Meyers C."/>
            <person name="Nakajima M."/>
            <person name="Narusaka M."/>
            <person name="Seki M."/>
            <person name="Sakurai T."/>
            <person name="Satou M."/>
            <person name="Tamse R."/>
            <person name="Vaysberg M."/>
            <person name="Wallender E.K."/>
            <person name="Wong C."/>
            <person name="Yamamura Y."/>
            <person name="Yuan S."/>
            <person name="Shinozaki K."/>
            <person name="Davis R.W."/>
            <person name="Theologis A."/>
            <person name="Ecker J.R."/>
        </authorList>
    </citation>
    <scope>NUCLEOTIDE SEQUENCE [LARGE SCALE MRNA]</scope>
    <source>
        <strain>cv. Columbia</strain>
    </source>
</reference>
<reference key="6">
    <citation type="journal article" date="2005" name="Plant Sci.">
        <title>Reduced expression of a protein homologous to glycogenin leads to reduction of starch content in Arabidopsis leaves.</title>
        <authorList>
            <person name="Chatterjee M."/>
            <person name="Berbezy P."/>
            <person name="Vyas D."/>
            <person name="Coates S."/>
            <person name="Barsby T."/>
        </authorList>
        <dbReference type="AGRICOLA" id="IND43669941"/>
    </citation>
    <scope>GENE FAMILY</scope>
</reference>
<reference key="7">
    <citation type="journal article" date="2012" name="Plant Physiol.">
        <title>Three members of the Arabidopsis glycosyltransferase family 8 are xylan glucuronosyltransferases.</title>
        <authorList>
            <person name="Rennie E.A."/>
            <person name="Hansen S.F."/>
            <person name="Baidoo E.E.K."/>
            <person name="Hadi M.Z."/>
            <person name="Keasling J.D."/>
            <person name="Scheller H.V."/>
        </authorList>
    </citation>
    <scope>SUBCELLULAR LOCATION</scope>
</reference>
<reference key="8">
    <citation type="journal article" date="2013" name="Curr. Opin. Plant Biol.">
        <title>Plant sphingolipids: function follows form.</title>
        <authorList>
            <person name="Markham J.E."/>
            <person name="Lynch D.V."/>
            <person name="Napier J.A."/>
            <person name="Dunn T.M."/>
            <person name="Cahoon E.B."/>
        </authorList>
    </citation>
    <scope>REVIEW ON SPHINGOLIPIDS</scope>
</reference>
<reference key="9">
    <citation type="journal article" date="2017" name="Plant J.">
        <title>Glycosylation of inositol phosphorylceramide sphingolipids is required for normal growth and reproduction in Arabidopsis.</title>
        <authorList>
            <person name="Tartaglio V."/>
            <person name="Rennie E.A."/>
            <person name="Cahoon R."/>
            <person name="Wang G."/>
            <person name="Baidoo E."/>
            <person name="Mortimer J.C."/>
            <person name="Cahoon E.B."/>
            <person name="Scheller H.V."/>
        </authorList>
    </citation>
    <scope>FUNCTION</scope>
    <scope>DISRUPTION PHENOTYPE</scope>
    <scope>CATALYTIC ACTIVITY</scope>
    <source>
        <strain>cv. Columbia</strain>
    </source>
</reference>
<reference key="10">
    <citation type="journal article" date="2020" name="Trends Plant Sci.">
        <title>Synthesis and function of complex sphingolipid glycosylation.</title>
        <authorList>
            <person name="Mortimer J.C."/>
            <person name="Scheller H.V."/>
        </authorList>
    </citation>
    <scope>REVIEW</scope>
</reference>
<evidence type="ECO:0000250" key="1">
    <source>
        <dbReference type="UniProtKB" id="P13280"/>
    </source>
</evidence>
<evidence type="ECO:0000250" key="2">
    <source>
        <dbReference type="UniProtKB" id="P46976"/>
    </source>
</evidence>
<evidence type="ECO:0000255" key="3"/>
<evidence type="ECO:0000269" key="4">
    <source>
    </source>
</evidence>
<evidence type="ECO:0000269" key="5">
    <source>
    </source>
</evidence>
<evidence type="ECO:0000269" key="6">
    <source>
    </source>
</evidence>
<evidence type="ECO:0000303" key="7">
    <source>
    </source>
</evidence>
<evidence type="ECO:0000303" key="8">
    <source>
    </source>
</evidence>
<evidence type="ECO:0000305" key="9"/>
<evidence type="ECO:0000312" key="10">
    <source>
        <dbReference type="Araport" id="AT5G18480"/>
    </source>
</evidence>
<evidence type="ECO:0000312" key="11">
    <source>
        <dbReference type="EMBL" id="AC051626"/>
    </source>
</evidence>
<organism>
    <name type="scientific">Arabidopsis thaliana</name>
    <name type="common">Mouse-ear cress</name>
    <dbReference type="NCBI Taxonomy" id="3702"/>
    <lineage>
        <taxon>Eukaryota</taxon>
        <taxon>Viridiplantae</taxon>
        <taxon>Streptophyta</taxon>
        <taxon>Embryophyta</taxon>
        <taxon>Tracheophyta</taxon>
        <taxon>Spermatophyta</taxon>
        <taxon>Magnoliopsida</taxon>
        <taxon>eudicotyledons</taxon>
        <taxon>Gunneridae</taxon>
        <taxon>Pentapetalae</taxon>
        <taxon>rosids</taxon>
        <taxon>malvids</taxon>
        <taxon>Brassicales</taxon>
        <taxon>Brassicaceae</taxon>
        <taxon>Camelineae</taxon>
        <taxon>Arabidopsis</taxon>
    </lineage>
</organism>
<comment type="function">
    <text evidence="5 6">Mediates the transfer of glucuronic acid (GlcA) from UDP-GlcA to glycosyl inositol phosphorylceramides (GIPCs) (PubMed:25122154, PubMed:27643972). The formation of GIPCs sphingolipids is essential for pollen function, plant growth and defense (PubMed:25122154, PubMed:27643972). Required for global fitness (PubMed:27643972).</text>
</comment>
<comment type="catalytic activity">
    <reaction evidence="5">
        <text>glucuronate acceptor + UDP-alpha-D-glucuronate = acceptor beta-D-glucuronoside + UDP + H(+)</text>
        <dbReference type="Rhea" id="RHEA:21032"/>
        <dbReference type="ChEBI" id="CHEBI:15378"/>
        <dbReference type="ChEBI" id="CHEBI:58052"/>
        <dbReference type="ChEBI" id="CHEBI:58223"/>
        <dbReference type="ChEBI" id="CHEBI:132367"/>
        <dbReference type="ChEBI" id="CHEBI:132368"/>
        <dbReference type="EC" id="2.4.1.17"/>
    </reaction>
</comment>
<comment type="catalytic activity">
    <reaction evidence="5 6">
        <text>a 1D-myo-inositol-1-phospho-N-[(R)-2-hydroxy-very-long-chain fatty acyl]-(R)-4-hydroxysphingoid base + UDP-alpha-D-glucuronate = an alpha-D-glucuronosyl-(1&lt;-&gt;6)-1D-myo-inositol-1-phospho-N-[(R)-2-hydroxy-very-long-chain fatty acyl]-(R)-4-hydroxysphingoid base + UDP + H(+)</text>
        <dbReference type="Rhea" id="RHEA:65576"/>
        <dbReference type="ChEBI" id="CHEBI:15378"/>
        <dbReference type="ChEBI" id="CHEBI:58052"/>
        <dbReference type="ChEBI" id="CHEBI:58223"/>
        <dbReference type="ChEBI" id="CHEBI:155926"/>
        <dbReference type="ChEBI" id="CHEBI:156567"/>
    </reaction>
</comment>
<comment type="cofactor">
    <cofactor evidence="2">
        <name>Mn(2+)</name>
        <dbReference type="ChEBI" id="CHEBI:29035"/>
    </cofactor>
</comment>
<comment type="pathway">
    <text evidence="6">Sphingolipid metabolism.</text>
</comment>
<comment type="subcellular location">
    <subcellularLocation>
        <location evidence="4">Golgi apparatus membrane</location>
        <topology evidence="3">Multi-pass membrane protein</topology>
    </subcellularLocation>
</comment>
<comment type="tissue specificity">
    <text evidence="5">Expressed in seedlings, roots, leaves, stems and siliques.</text>
</comment>
<comment type="developmental stage">
    <text evidence="5">Expressed throughout pollen development.</text>
</comment>
<comment type="disruption phenotype">
    <text evidence="5 6">Defect in transmission of mutated alleles through the male gametophyte (e.g. pollen) (PubMed:25122154). Pollen rescued mutants show severe dwarfism with reduced roots, compromised pollen tube guidance, and constitutive activation of salicyclic acid-mediated defense pathways. They have also an altered sphingolipidome with reduced glycosyl inositol phosphorylceramides (GIPCs), increased ceramides, and an increased incorporation of short-chain fatty acids and dihydroxylated bases into inositol phosphorylceramides and GIPCs (PubMed:27643972).</text>
</comment>
<comment type="similarity">
    <text evidence="9">Belongs to the glycosyltransferase 8 family. Glycogenin subfamily.</text>
</comment>
<proteinExistence type="evidence at protein level"/>
<keyword id="KW-0328">Glycosyltransferase</keyword>
<keyword id="KW-0333">Golgi apparatus</keyword>
<keyword id="KW-0464">Manganese</keyword>
<keyword id="KW-0472">Membrane</keyword>
<keyword id="KW-0479">Metal-binding</keyword>
<keyword id="KW-1185">Reference proteome</keyword>
<keyword id="KW-0808">Transferase</keyword>
<keyword id="KW-0812">Transmembrane</keyword>
<keyword id="KW-1133">Transmembrane helix</keyword>
<gene>
    <name evidence="8" type="primary">IPUT1</name>
    <name evidence="7" type="synonym">PGSIP6</name>
    <name evidence="10" type="ordered locus">At5g18480</name>
    <name evidence="11" type="ORF">T28N17.3</name>
</gene>
<dbReference type="EC" id="2.4.1.17" evidence="5"/>
<dbReference type="EMBL" id="KJ138680">
    <property type="protein sequence ID" value="AHL38620.1"/>
    <property type="molecule type" value="mRNA"/>
</dbReference>
<dbReference type="EMBL" id="AC051626">
    <property type="status" value="NOT_ANNOTATED_CDS"/>
    <property type="molecule type" value="Genomic_DNA"/>
</dbReference>
<dbReference type="EMBL" id="CP002688">
    <property type="protein sequence ID" value="AED92569.1"/>
    <property type="molecule type" value="Genomic_DNA"/>
</dbReference>
<dbReference type="EMBL" id="AK118951">
    <property type="protein sequence ID" value="BAC43531.1"/>
    <property type="molecule type" value="mRNA"/>
</dbReference>
<dbReference type="EMBL" id="AF462795">
    <property type="protein sequence ID" value="AAL58891.1"/>
    <property type="molecule type" value="mRNA"/>
</dbReference>
<dbReference type="EMBL" id="AY143921">
    <property type="protein sequence ID" value="AAN28860.1"/>
    <property type="molecule type" value="mRNA"/>
</dbReference>
<dbReference type="RefSeq" id="NP_197349.2">
    <property type="nucleotide sequence ID" value="NM_121853.4"/>
</dbReference>
<dbReference type="SMR" id="Q8GWB7"/>
<dbReference type="FunCoup" id="Q8GWB7">
    <property type="interactions" value="1163"/>
</dbReference>
<dbReference type="STRING" id="3702.Q8GWB7"/>
<dbReference type="CAZy" id="GT8">
    <property type="family name" value="Glycosyltransferase Family 8"/>
</dbReference>
<dbReference type="SwissPalm" id="Q8GWB7"/>
<dbReference type="PaxDb" id="3702-AT5G18480.1"/>
<dbReference type="ProteomicsDB" id="247275"/>
<dbReference type="EnsemblPlants" id="AT5G18480.1">
    <property type="protein sequence ID" value="AT5G18480.1"/>
    <property type="gene ID" value="AT5G18480"/>
</dbReference>
<dbReference type="GeneID" id="831966"/>
<dbReference type="Gramene" id="AT5G18480.1">
    <property type="protein sequence ID" value="AT5G18480.1"/>
    <property type="gene ID" value="AT5G18480"/>
</dbReference>
<dbReference type="KEGG" id="ath:AT5G18480"/>
<dbReference type="Araport" id="AT5G18480"/>
<dbReference type="TAIR" id="AT5G18480">
    <property type="gene designation" value="PGSIP6"/>
</dbReference>
<dbReference type="eggNOG" id="KOG1950">
    <property type="taxonomic scope" value="Eukaryota"/>
</dbReference>
<dbReference type="HOGENOM" id="CLU_030312_0_0_1"/>
<dbReference type="InParanoid" id="Q8GWB7"/>
<dbReference type="OMA" id="ALLFCYY"/>
<dbReference type="OrthoDB" id="2014201at2759"/>
<dbReference type="PhylomeDB" id="Q8GWB7"/>
<dbReference type="BioCyc" id="ARA:AT5G18480-MONOMER"/>
<dbReference type="BRENDA" id="2.4.1.17">
    <property type="organism ID" value="399"/>
</dbReference>
<dbReference type="CD-CODE" id="4299E36E">
    <property type="entry name" value="Nucleolus"/>
</dbReference>
<dbReference type="PRO" id="PR:Q8GWB7"/>
<dbReference type="Proteomes" id="UP000006548">
    <property type="component" value="Chromosome 5"/>
</dbReference>
<dbReference type="ExpressionAtlas" id="Q8GWB7">
    <property type="expression patterns" value="baseline and differential"/>
</dbReference>
<dbReference type="GO" id="GO:0005768">
    <property type="term" value="C:endosome"/>
    <property type="evidence" value="ECO:0007005"/>
    <property type="project" value="TAIR"/>
</dbReference>
<dbReference type="GO" id="GO:0005794">
    <property type="term" value="C:Golgi apparatus"/>
    <property type="evidence" value="ECO:0000314"/>
    <property type="project" value="TAIR"/>
</dbReference>
<dbReference type="GO" id="GO:0005797">
    <property type="term" value="C:Golgi medial cisterna"/>
    <property type="evidence" value="ECO:0007005"/>
    <property type="project" value="TAIR"/>
</dbReference>
<dbReference type="GO" id="GO:0000139">
    <property type="term" value="C:Golgi membrane"/>
    <property type="evidence" value="ECO:0007669"/>
    <property type="project" value="UniProtKB-SubCell"/>
</dbReference>
<dbReference type="GO" id="GO:0005802">
    <property type="term" value="C:trans-Golgi network"/>
    <property type="evidence" value="ECO:0007005"/>
    <property type="project" value="TAIR"/>
</dbReference>
<dbReference type="GO" id="GO:0015020">
    <property type="term" value="F:glucuronosyltransferase activity"/>
    <property type="evidence" value="ECO:0000314"/>
    <property type="project" value="UniProtKB"/>
</dbReference>
<dbReference type="GO" id="GO:0046872">
    <property type="term" value="F:metal ion binding"/>
    <property type="evidence" value="ECO:0007669"/>
    <property type="project" value="UniProtKB-KW"/>
</dbReference>
<dbReference type="GO" id="GO:1990482">
    <property type="term" value="F:sphingolipid alpha-glucuronosyltransferase activity"/>
    <property type="evidence" value="ECO:0000314"/>
    <property type="project" value="UniProtKB"/>
</dbReference>
<dbReference type="GO" id="GO:0046513">
    <property type="term" value="P:ceramide biosynthetic process"/>
    <property type="evidence" value="ECO:0000314"/>
    <property type="project" value="UniProtKB"/>
</dbReference>
<dbReference type="GO" id="GO:0006673">
    <property type="term" value="P:inositol phosphoceramide metabolic process"/>
    <property type="evidence" value="ECO:0000314"/>
    <property type="project" value="UniProtKB"/>
</dbReference>
<dbReference type="GO" id="GO:0009555">
    <property type="term" value="P:pollen development"/>
    <property type="evidence" value="ECO:0000315"/>
    <property type="project" value="UniProtKB"/>
</dbReference>
<dbReference type="GO" id="GO:0010183">
    <property type="term" value="P:pollen tube guidance"/>
    <property type="evidence" value="ECO:0000315"/>
    <property type="project" value="UniProtKB"/>
</dbReference>
<dbReference type="CDD" id="cd02537">
    <property type="entry name" value="GT8_Glycogenin"/>
    <property type="match status" value="1"/>
</dbReference>
<dbReference type="FunFam" id="3.90.550.10:FF:000067">
    <property type="entry name" value="Hexosyltransferase"/>
    <property type="match status" value="1"/>
</dbReference>
<dbReference type="Gene3D" id="3.90.550.10">
    <property type="entry name" value="Spore Coat Polysaccharide Biosynthesis Protein SpsA, Chain A"/>
    <property type="match status" value="1"/>
</dbReference>
<dbReference type="InterPro" id="IPR002495">
    <property type="entry name" value="Glyco_trans_8"/>
</dbReference>
<dbReference type="InterPro" id="IPR050587">
    <property type="entry name" value="GNT1/Glycosyltrans_8"/>
</dbReference>
<dbReference type="InterPro" id="IPR029044">
    <property type="entry name" value="Nucleotide-diphossugar_trans"/>
</dbReference>
<dbReference type="PANTHER" id="PTHR11183">
    <property type="entry name" value="GLYCOGENIN SUBFAMILY MEMBER"/>
    <property type="match status" value="1"/>
</dbReference>
<dbReference type="Pfam" id="PF01501">
    <property type="entry name" value="Glyco_transf_8"/>
    <property type="match status" value="1"/>
</dbReference>
<dbReference type="SUPFAM" id="SSF53448">
    <property type="entry name" value="Nucleotide-diphospho-sugar transferases"/>
    <property type="match status" value="1"/>
</dbReference>
<protein>
    <recommendedName>
        <fullName evidence="8">Inositol phosphorylceramide glucuronosyltransferase 1</fullName>
        <ecNumber evidence="5">2.4.1.17</ecNumber>
    </recommendedName>
    <alternativeName>
        <fullName evidence="7">Glycogenin-like protein 6</fullName>
    </alternativeName>
    <alternativeName>
        <fullName evidence="7">Plant glycogenin-like starch initiation protein 6</fullName>
    </alternativeName>
</protein>
<name>GUX6_ARATH</name>